<protein>
    <recommendedName>
        <fullName evidence="1">UPF0297 protein SSP1144</fullName>
    </recommendedName>
</protein>
<evidence type="ECO:0000255" key="1">
    <source>
        <dbReference type="HAMAP-Rule" id="MF_01507"/>
    </source>
</evidence>
<keyword id="KW-1185">Reference proteome</keyword>
<sequence length="86" mass="10240">MENFDKTMKFNYDEIPKEDVKTVLQNVYHTLEERGYNPVNQIVGYLLSGDPAYIPRNNEARNQIRRIDRDDIMEELVSNYLQEKSN</sequence>
<accession>Q49Y55</accession>
<reference key="1">
    <citation type="journal article" date="2005" name="Proc. Natl. Acad. Sci. U.S.A.">
        <title>Whole genome sequence of Staphylococcus saprophyticus reveals the pathogenesis of uncomplicated urinary tract infection.</title>
        <authorList>
            <person name="Kuroda M."/>
            <person name="Yamashita A."/>
            <person name="Hirakawa H."/>
            <person name="Kumano M."/>
            <person name="Morikawa K."/>
            <person name="Higashide M."/>
            <person name="Maruyama A."/>
            <person name="Inose Y."/>
            <person name="Matoba K."/>
            <person name="Toh H."/>
            <person name="Kuhara S."/>
            <person name="Hattori M."/>
            <person name="Ohta T."/>
        </authorList>
    </citation>
    <scope>NUCLEOTIDE SEQUENCE [LARGE SCALE GENOMIC DNA]</scope>
    <source>
        <strain>ATCC 15305 / DSM 20229 / NCIMB 8711 / NCTC 7292 / S-41</strain>
    </source>
</reference>
<feature type="chain" id="PRO_0000216986" description="UPF0297 protein SSP1144">
    <location>
        <begin position="1"/>
        <end position="86"/>
    </location>
</feature>
<dbReference type="EMBL" id="AP008934">
    <property type="protein sequence ID" value="BAE18289.1"/>
    <property type="molecule type" value="Genomic_DNA"/>
</dbReference>
<dbReference type="RefSeq" id="WP_002483121.1">
    <property type="nucleotide sequence ID" value="NZ_MTGA01000038.1"/>
</dbReference>
<dbReference type="SMR" id="Q49Y55"/>
<dbReference type="KEGG" id="ssp:SSP1144"/>
<dbReference type="eggNOG" id="COG4472">
    <property type="taxonomic scope" value="Bacteria"/>
</dbReference>
<dbReference type="HOGENOM" id="CLU_162466_0_0_9"/>
<dbReference type="OrthoDB" id="9796303at2"/>
<dbReference type="Proteomes" id="UP000006371">
    <property type="component" value="Chromosome"/>
</dbReference>
<dbReference type="HAMAP" id="MF_01507">
    <property type="entry name" value="UPF0297"/>
    <property type="match status" value="1"/>
</dbReference>
<dbReference type="InterPro" id="IPR009309">
    <property type="entry name" value="IreB"/>
</dbReference>
<dbReference type="NCBIfam" id="NF003997">
    <property type="entry name" value="PRK05473.1"/>
    <property type="match status" value="1"/>
</dbReference>
<dbReference type="PANTHER" id="PTHR40067">
    <property type="entry name" value="UPF0297 PROTEIN YRZL"/>
    <property type="match status" value="1"/>
</dbReference>
<dbReference type="PANTHER" id="PTHR40067:SF1">
    <property type="entry name" value="UPF0297 PROTEIN YRZL"/>
    <property type="match status" value="1"/>
</dbReference>
<dbReference type="Pfam" id="PF06135">
    <property type="entry name" value="IreB"/>
    <property type="match status" value="1"/>
</dbReference>
<dbReference type="PIRSF" id="PIRSF037258">
    <property type="entry name" value="DUF965_bac"/>
    <property type="match status" value="1"/>
</dbReference>
<comment type="similarity">
    <text evidence="1">Belongs to the UPF0297 family.</text>
</comment>
<gene>
    <name type="ordered locus">SSP1144</name>
</gene>
<organism>
    <name type="scientific">Staphylococcus saprophyticus subsp. saprophyticus (strain ATCC 15305 / DSM 20229 / NCIMB 8711 / NCTC 7292 / S-41)</name>
    <dbReference type="NCBI Taxonomy" id="342451"/>
    <lineage>
        <taxon>Bacteria</taxon>
        <taxon>Bacillati</taxon>
        <taxon>Bacillota</taxon>
        <taxon>Bacilli</taxon>
        <taxon>Bacillales</taxon>
        <taxon>Staphylococcaceae</taxon>
        <taxon>Staphylococcus</taxon>
    </lineage>
</organism>
<name>Y1144_STAS1</name>
<proteinExistence type="inferred from homology"/>